<name>TRPA_SHOC1</name>
<organism>
    <name type="scientific">Shouchella clausii (strain KSM-K16)</name>
    <name type="common">Alkalihalobacillus clausii</name>
    <dbReference type="NCBI Taxonomy" id="66692"/>
    <lineage>
        <taxon>Bacteria</taxon>
        <taxon>Bacillati</taxon>
        <taxon>Bacillota</taxon>
        <taxon>Bacilli</taxon>
        <taxon>Bacillales</taxon>
        <taxon>Bacillaceae</taxon>
        <taxon>Shouchella</taxon>
    </lineage>
</organism>
<accession>Q5WGS0</accession>
<keyword id="KW-0028">Amino-acid biosynthesis</keyword>
<keyword id="KW-0057">Aromatic amino acid biosynthesis</keyword>
<keyword id="KW-0456">Lyase</keyword>
<keyword id="KW-1185">Reference proteome</keyword>
<keyword id="KW-0822">Tryptophan biosynthesis</keyword>
<gene>
    <name evidence="1" type="primary">trpA</name>
    <name type="ordered locus">ABC1900</name>
</gene>
<evidence type="ECO:0000255" key="1">
    <source>
        <dbReference type="HAMAP-Rule" id="MF_00131"/>
    </source>
</evidence>
<reference key="1">
    <citation type="submission" date="2003-10" db="EMBL/GenBank/DDBJ databases">
        <title>The complete genome sequence of the alkaliphilic Bacillus clausii KSM-K16.</title>
        <authorList>
            <person name="Takaki Y."/>
            <person name="Kageyama Y."/>
            <person name="Shimamura S."/>
            <person name="Suzuki H."/>
            <person name="Nishi S."/>
            <person name="Hatada Y."/>
            <person name="Kawai S."/>
            <person name="Ito S."/>
            <person name="Horikoshi K."/>
        </authorList>
    </citation>
    <scope>NUCLEOTIDE SEQUENCE [LARGE SCALE GENOMIC DNA]</scope>
    <source>
        <strain>KSM-K16</strain>
    </source>
</reference>
<protein>
    <recommendedName>
        <fullName evidence="1">Tryptophan synthase alpha chain</fullName>
        <ecNumber evidence="1">4.2.1.20</ecNumber>
    </recommendedName>
</protein>
<feature type="chain" id="PRO_0000098742" description="Tryptophan synthase alpha chain">
    <location>
        <begin position="1"/>
        <end position="269"/>
    </location>
</feature>
<feature type="active site" description="Proton acceptor" evidence="1">
    <location>
        <position position="45"/>
    </location>
</feature>
<feature type="active site" description="Proton acceptor" evidence="1">
    <location>
        <position position="56"/>
    </location>
</feature>
<sequence length="269" mass="29049">MNKRLRDAVKKGNLFIPFITAGDPVREATIALALSLQRSGADVLELGIPYSDPLADGPVIQNASKRALAGGMTLAKAMALVPEMRKEGLTIPVIVFTYANPLLQFGFERFCETACDYGIDGLLVPDLPFEESETLANECEKQGLALISLVAPTSQQRIKAIASRAQGFLYCVSSLGVTGARKTLHPQVEAFLKLVKEASPVPFVVGFGISSYEQVEEMGRHADGVVIGSAIVEQIGLRCEALKQAESRDEAVKEIEQYVNSLLHPAPTY</sequence>
<dbReference type="EC" id="4.2.1.20" evidence="1"/>
<dbReference type="EMBL" id="AP006627">
    <property type="protein sequence ID" value="BAD64435.1"/>
    <property type="molecule type" value="Genomic_DNA"/>
</dbReference>
<dbReference type="RefSeq" id="WP_011246743.1">
    <property type="nucleotide sequence ID" value="NC_006582.1"/>
</dbReference>
<dbReference type="SMR" id="Q5WGS0"/>
<dbReference type="STRING" id="66692.ABC1900"/>
<dbReference type="KEGG" id="bcl:ABC1900"/>
<dbReference type="eggNOG" id="COG0159">
    <property type="taxonomic scope" value="Bacteria"/>
</dbReference>
<dbReference type="HOGENOM" id="CLU_016734_0_0_9"/>
<dbReference type="OrthoDB" id="9804578at2"/>
<dbReference type="UniPathway" id="UPA00035">
    <property type="reaction ID" value="UER00044"/>
</dbReference>
<dbReference type="Proteomes" id="UP000001168">
    <property type="component" value="Chromosome"/>
</dbReference>
<dbReference type="GO" id="GO:0005829">
    <property type="term" value="C:cytosol"/>
    <property type="evidence" value="ECO:0007669"/>
    <property type="project" value="TreeGrafter"/>
</dbReference>
<dbReference type="GO" id="GO:0004834">
    <property type="term" value="F:tryptophan synthase activity"/>
    <property type="evidence" value="ECO:0007669"/>
    <property type="project" value="UniProtKB-UniRule"/>
</dbReference>
<dbReference type="CDD" id="cd04724">
    <property type="entry name" value="Tryptophan_synthase_alpha"/>
    <property type="match status" value="1"/>
</dbReference>
<dbReference type="FunFam" id="3.20.20.70:FF:000037">
    <property type="entry name" value="Tryptophan synthase alpha chain"/>
    <property type="match status" value="1"/>
</dbReference>
<dbReference type="Gene3D" id="3.20.20.70">
    <property type="entry name" value="Aldolase class I"/>
    <property type="match status" value="1"/>
</dbReference>
<dbReference type="HAMAP" id="MF_00131">
    <property type="entry name" value="Trp_synth_alpha"/>
    <property type="match status" value="1"/>
</dbReference>
<dbReference type="InterPro" id="IPR013785">
    <property type="entry name" value="Aldolase_TIM"/>
</dbReference>
<dbReference type="InterPro" id="IPR011060">
    <property type="entry name" value="RibuloseP-bd_barrel"/>
</dbReference>
<dbReference type="InterPro" id="IPR018204">
    <property type="entry name" value="Trp_synthase_alpha_AS"/>
</dbReference>
<dbReference type="InterPro" id="IPR002028">
    <property type="entry name" value="Trp_synthase_suA"/>
</dbReference>
<dbReference type="NCBIfam" id="TIGR00262">
    <property type="entry name" value="trpA"/>
    <property type="match status" value="1"/>
</dbReference>
<dbReference type="PANTHER" id="PTHR43406:SF1">
    <property type="entry name" value="TRYPTOPHAN SYNTHASE ALPHA CHAIN, CHLOROPLASTIC"/>
    <property type="match status" value="1"/>
</dbReference>
<dbReference type="PANTHER" id="PTHR43406">
    <property type="entry name" value="TRYPTOPHAN SYNTHASE, ALPHA CHAIN"/>
    <property type="match status" value="1"/>
</dbReference>
<dbReference type="Pfam" id="PF00290">
    <property type="entry name" value="Trp_syntA"/>
    <property type="match status" value="1"/>
</dbReference>
<dbReference type="SUPFAM" id="SSF51366">
    <property type="entry name" value="Ribulose-phoshate binding barrel"/>
    <property type="match status" value="1"/>
</dbReference>
<dbReference type="PROSITE" id="PS00167">
    <property type="entry name" value="TRP_SYNTHASE_ALPHA"/>
    <property type="match status" value="1"/>
</dbReference>
<proteinExistence type="inferred from homology"/>
<comment type="function">
    <text evidence="1">The alpha subunit is responsible for the aldol cleavage of indoleglycerol phosphate to indole and glyceraldehyde 3-phosphate.</text>
</comment>
<comment type="catalytic activity">
    <reaction evidence="1">
        <text>(1S,2R)-1-C-(indol-3-yl)glycerol 3-phosphate + L-serine = D-glyceraldehyde 3-phosphate + L-tryptophan + H2O</text>
        <dbReference type="Rhea" id="RHEA:10532"/>
        <dbReference type="ChEBI" id="CHEBI:15377"/>
        <dbReference type="ChEBI" id="CHEBI:33384"/>
        <dbReference type="ChEBI" id="CHEBI:57912"/>
        <dbReference type="ChEBI" id="CHEBI:58866"/>
        <dbReference type="ChEBI" id="CHEBI:59776"/>
        <dbReference type="EC" id="4.2.1.20"/>
    </reaction>
</comment>
<comment type="pathway">
    <text evidence="1">Amino-acid biosynthesis; L-tryptophan biosynthesis; L-tryptophan from chorismate: step 5/5.</text>
</comment>
<comment type="subunit">
    <text evidence="1">Tetramer of two alpha and two beta chains.</text>
</comment>
<comment type="similarity">
    <text evidence="1">Belongs to the TrpA family.</text>
</comment>